<proteinExistence type="inferred from homology"/>
<name>RL23_KORVE</name>
<sequence length="98" mass="11201">MAKSAYQILRKPVITEKGLGVKETESTLVFEVSANATKTEIKEAVQKTFKVKVDTVRTANFVGKERRRGKFSGYRPDWKKAYVRLKTGEKMPEYAENL</sequence>
<evidence type="ECO:0000255" key="1">
    <source>
        <dbReference type="HAMAP-Rule" id="MF_01369"/>
    </source>
</evidence>
<evidence type="ECO:0000305" key="2"/>
<comment type="function">
    <text evidence="1">One of the early assembly proteins it binds 23S rRNA. One of the proteins that surrounds the polypeptide exit tunnel on the outside of the ribosome. Forms the main docking site for trigger factor binding to the ribosome.</text>
</comment>
<comment type="subunit">
    <text evidence="1">Part of the 50S ribosomal subunit. Contacts protein L29, and trigger factor when it is bound to the ribosome.</text>
</comment>
<comment type="similarity">
    <text evidence="1">Belongs to the universal ribosomal protein uL23 family.</text>
</comment>
<keyword id="KW-1185">Reference proteome</keyword>
<keyword id="KW-0687">Ribonucleoprotein</keyword>
<keyword id="KW-0689">Ribosomal protein</keyword>
<keyword id="KW-0694">RNA-binding</keyword>
<keyword id="KW-0699">rRNA-binding</keyword>
<feature type="chain" id="PRO_0000272690" description="Large ribosomal subunit protein uL23">
    <location>
        <begin position="1"/>
        <end position="98"/>
    </location>
</feature>
<gene>
    <name evidence="1" type="primary">rplW</name>
    <name type="ordered locus">Acid345_1228</name>
</gene>
<dbReference type="EMBL" id="CP000360">
    <property type="protein sequence ID" value="ABF40230.1"/>
    <property type="molecule type" value="Genomic_DNA"/>
</dbReference>
<dbReference type="RefSeq" id="WP_011522032.1">
    <property type="nucleotide sequence ID" value="NC_008009.1"/>
</dbReference>
<dbReference type="SMR" id="Q1ISC0"/>
<dbReference type="STRING" id="204669.Acid345_1228"/>
<dbReference type="EnsemblBacteria" id="ABF40230">
    <property type="protein sequence ID" value="ABF40230"/>
    <property type="gene ID" value="Acid345_1228"/>
</dbReference>
<dbReference type="KEGG" id="aba:Acid345_1228"/>
<dbReference type="eggNOG" id="COG0089">
    <property type="taxonomic scope" value="Bacteria"/>
</dbReference>
<dbReference type="HOGENOM" id="CLU_037562_3_1_0"/>
<dbReference type="OrthoDB" id="9793353at2"/>
<dbReference type="Proteomes" id="UP000002432">
    <property type="component" value="Chromosome"/>
</dbReference>
<dbReference type="GO" id="GO:1990904">
    <property type="term" value="C:ribonucleoprotein complex"/>
    <property type="evidence" value="ECO:0007669"/>
    <property type="project" value="UniProtKB-KW"/>
</dbReference>
<dbReference type="GO" id="GO:0005840">
    <property type="term" value="C:ribosome"/>
    <property type="evidence" value="ECO:0007669"/>
    <property type="project" value="UniProtKB-KW"/>
</dbReference>
<dbReference type="GO" id="GO:0019843">
    <property type="term" value="F:rRNA binding"/>
    <property type="evidence" value="ECO:0007669"/>
    <property type="project" value="UniProtKB-UniRule"/>
</dbReference>
<dbReference type="GO" id="GO:0003735">
    <property type="term" value="F:structural constituent of ribosome"/>
    <property type="evidence" value="ECO:0007669"/>
    <property type="project" value="InterPro"/>
</dbReference>
<dbReference type="GO" id="GO:0006412">
    <property type="term" value="P:translation"/>
    <property type="evidence" value="ECO:0007669"/>
    <property type="project" value="UniProtKB-UniRule"/>
</dbReference>
<dbReference type="FunFam" id="3.30.70.330:FF:000001">
    <property type="entry name" value="50S ribosomal protein L23"/>
    <property type="match status" value="1"/>
</dbReference>
<dbReference type="Gene3D" id="3.30.70.330">
    <property type="match status" value="1"/>
</dbReference>
<dbReference type="HAMAP" id="MF_01369_B">
    <property type="entry name" value="Ribosomal_uL23_B"/>
    <property type="match status" value="1"/>
</dbReference>
<dbReference type="InterPro" id="IPR012677">
    <property type="entry name" value="Nucleotide-bd_a/b_plait_sf"/>
</dbReference>
<dbReference type="InterPro" id="IPR013025">
    <property type="entry name" value="Ribosomal_uL23-like"/>
</dbReference>
<dbReference type="InterPro" id="IPR012678">
    <property type="entry name" value="Ribosomal_uL23/eL15/eS24_sf"/>
</dbReference>
<dbReference type="NCBIfam" id="NF004359">
    <property type="entry name" value="PRK05738.1-3"/>
    <property type="match status" value="1"/>
</dbReference>
<dbReference type="NCBIfam" id="NF004363">
    <property type="entry name" value="PRK05738.2-4"/>
    <property type="match status" value="1"/>
</dbReference>
<dbReference type="NCBIfam" id="NF004366">
    <property type="entry name" value="PRK05738.3-2"/>
    <property type="match status" value="1"/>
</dbReference>
<dbReference type="PANTHER" id="PTHR11620">
    <property type="entry name" value="60S RIBOSOMAL PROTEIN L23A"/>
    <property type="match status" value="1"/>
</dbReference>
<dbReference type="Pfam" id="PF00276">
    <property type="entry name" value="Ribosomal_L23"/>
    <property type="match status" value="1"/>
</dbReference>
<dbReference type="SUPFAM" id="SSF54189">
    <property type="entry name" value="Ribosomal proteins S24e, L23 and L15e"/>
    <property type="match status" value="1"/>
</dbReference>
<accession>Q1ISC0</accession>
<organism>
    <name type="scientific">Koribacter versatilis (strain Ellin345)</name>
    <dbReference type="NCBI Taxonomy" id="204669"/>
    <lineage>
        <taxon>Bacteria</taxon>
        <taxon>Pseudomonadati</taxon>
        <taxon>Acidobacteriota</taxon>
        <taxon>Terriglobia</taxon>
        <taxon>Terriglobales</taxon>
        <taxon>Candidatus Korobacteraceae</taxon>
        <taxon>Candidatus Korobacter</taxon>
    </lineage>
</organism>
<reference key="1">
    <citation type="journal article" date="2009" name="Appl. Environ. Microbiol.">
        <title>Three genomes from the phylum Acidobacteria provide insight into the lifestyles of these microorganisms in soils.</title>
        <authorList>
            <person name="Ward N.L."/>
            <person name="Challacombe J.F."/>
            <person name="Janssen P.H."/>
            <person name="Henrissat B."/>
            <person name="Coutinho P.M."/>
            <person name="Wu M."/>
            <person name="Xie G."/>
            <person name="Haft D.H."/>
            <person name="Sait M."/>
            <person name="Badger J."/>
            <person name="Barabote R.D."/>
            <person name="Bradley B."/>
            <person name="Brettin T.S."/>
            <person name="Brinkac L.M."/>
            <person name="Bruce D."/>
            <person name="Creasy T."/>
            <person name="Daugherty S.C."/>
            <person name="Davidsen T.M."/>
            <person name="DeBoy R.T."/>
            <person name="Detter J.C."/>
            <person name="Dodson R.J."/>
            <person name="Durkin A.S."/>
            <person name="Ganapathy A."/>
            <person name="Gwinn-Giglio M."/>
            <person name="Han C.S."/>
            <person name="Khouri H."/>
            <person name="Kiss H."/>
            <person name="Kothari S.P."/>
            <person name="Madupu R."/>
            <person name="Nelson K.E."/>
            <person name="Nelson W.C."/>
            <person name="Paulsen I."/>
            <person name="Penn K."/>
            <person name="Ren Q."/>
            <person name="Rosovitz M.J."/>
            <person name="Selengut J.D."/>
            <person name="Shrivastava S."/>
            <person name="Sullivan S.A."/>
            <person name="Tapia R."/>
            <person name="Thompson L.S."/>
            <person name="Watkins K.L."/>
            <person name="Yang Q."/>
            <person name="Yu C."/>
            <person name="Zafar N."/>
            <person name="Zhou L."/>
            <person name="Kuske C.R."/>
        </authorList>
    </citation>
    <scope>NUCLEOTIDE SEQUENCE [LARGE SCALE GENOMIC DNA]</scope>
    <source>
        <strain>Ellin345</strain>
    </source>
</reference>
<protein>
    <recommendedName>
        <fullName evidence="1">Large ribosomal subunit protein uL23</fullName>
    </recommendedName>
    <alternativeName>
        <fullName evidence="2">50S ribosomal protein L23</fullName>
    </alternativeName>
</protein>